<dbReference type="GO" id="GO:0005576">
    <property type="term" value="C:extracellular region"/>
    <property type="evidence" value="ECO:0007669"/>
    <property type="project" value="UniProtKB-SubCell"/>
</dbReference>
<dbReference type="GO" id="GO:0016853">
    <property type="term" value="F:isomerase activity"/>
    <property type="evidence" value="ECO:0007669"/>
    <property type="project" value="UniProtKB-KW"/>
</dbReference>
<name>ISOLC_AGEAP</name>
<comment type="function">
    <text evidence="1">Peptide isomerase that inverts the chirality at the Ser-81 of omega-Aga IVB. Acts cofactor-independently.</text>
</comment>
<comment type="subunit">
    <text evidence="1">Heterodimer with venom peptide isomerase heavy chain; disulfide-linked.</text>
</comment>
<comment type="subcellular location">
    <subcellularLocation>
        <location evidence="1">Secreted</location>
    </subcellularLocation>
</comment>
<comment type="tissue specificity">
    <text evidence="1">Expressed by the venom gland.</text>
</comment>
<sequence length="18" mass="1927">VEVATVKNCGKKLLATPR</sequence>
<protein>
    <recommendedName>
        <fullName>Venom peptide isomerase light chain</fullName>
    </recommendedName>
</protein>
<reference key="1">
    <citation type="journal article" date="1995" name="J. Biol. Chem.">
        <title>Isolation and characterization of a peptide isomerase from funnel web spider venom.</title>
        <authorList>
            <person name="Shikata Y."/>
            <person name="Watanabe T."/>
            <person name="Teramoto T."/>
            <person name="Inoue A."/>
            <person name="Kawakami Y."/>
            <person name="Nishizawa Y."/>
            <person name="Katayama K."/>
            <person name="Kuwada M."/>
        </authorList>
    </citation>
    <scope>PROTEIN SEQUENCE</scope>
    <scope>FUNCTION</scope>
    <scope>SUBUNIT</scope>
    <scope>SUBCELLULAR LOCATION</scope>
    <scope>TISSUE SPECIFICITY</scope>
    <scope>DISULFIDE BOND</scope>
    <source>
        <tissue>Venom</tissue>
    </source>
</reference>
<accession>Q9TWH3</accession>
<organism>
    <name type="scientific">Agelenopsis aperta</name>
    <name type="common">North American funnel-web spider</name>
    <name type="synonym">Agelenopsis gertschi</name>
    <dbReference type="NCBI Taxonomy" id="6908"/>
    <lineage>
        <taxon>Eukaryota</taxon>
        <taxon>Metazoa</taxon>
        <taxon>Ecdysozoa</taxon>
        <taxon>Arthropoda</taxon>
        <taxon>Chelicerata</taxon>
        <taxon>Arachnida</taxon>
        <taxon>Araneae</taxon>
        <taxon>Araneomorphae</taxon>
        <taxon>Entelegynae</taxon>
        <taxon>Agelenidae</taxon>
        <taxon>Agelenopsis</taxon>
    </lineage>
</organism>
<feature type="chain" id="PRO_0000404524" description="Venom peptide isomerase light chain">
    <location>
        <begin position="1"/>
        <end position="18"/>
    </location>
</feature>
<feature type="disulfide bond" description="Interchain (with C-116 in venom peptide isomerase heavy chain)" evidence="1">
    <location>
        <position position="9"/>
    </location>
</feature>
<proteinExistence type="evidence at protein level"/>
<keyword id="KW-0903">Direct protein sequencing</keyword>
<keyword id="KW-1015">Disulfide bond</keyword>
<keyword id="KW-0413">Isomerase</keyword>
<keyword id="KW-0964">Secreted</keyword>
<evidence type="ECO:0000269" key="1">
    <source>
    </source>
</evidence>